<comment type="function">
    <text evidence="2 4 5 6 7 8 9 11 12 15 16 18 19 21">An RNase that has endonuclease and 5'-3' exonuclease activity, playing a role in both rRNA and mRNA stability and degradation. Endonuclease activity can cleave within 4 nucleotides of the 5'-end of a triphosphorylated RNA. Endonuclease digestion by the RNase J1/J2 complex occurs at a different site and in some cases more efficiently than J1 or J2 alone. The exonuclease activity of the J1/J2 complex is highly processive on substrates longer than 5 nucleotides, on shorter substrates is distributive. Preferentially cleaves ssRNA, possibly in AU-rich regions. The 5'-exonuclease activity acts on 5'-hydroxyl and 5'-monophosphate but not 5'-triphosphate ends; it can digest through stem-loop structures if they are not too stable. Required for maturation of 16S rRNA. Acts preferentially on 16S rRNA precursors after association of the 30S and 50S ribosomal subunits. Plays a role in the secondary pathway of 23S rRNA 5' end maturation. Probably also participates in processing of pre-scRNA (the precursor of the signal recognition particle RNA). Major RNase that degrades both RNAs of the type I toxin-antitoxin system BsrE/SR5 (PubMed:26940229).</text>
</comment>
<comment type="cofactor">
    <cofactor evidence="2">
        <name>Ca(2+)</name>
        <dbReference type="ChEBI" id="CHEBI:29108"/>
    </cofactor>
    <text evidence="2">Binds 1 Ca(2+) cation per subunit. Seen in 1 crystal structure, it is not clear if it is physiologically important.</text>
</comment>
<comment type="cofactor">
    <cofactor evidence="2">
        <name>Zn(2+)</name>
        <dbReference type="ChEBI" id="CHEBI:29105"/>
    </cofactor>
    <text evidence="2">Binds 2 Zn(2+) ions per subunit. It is not clear if Zn(2+) or Mg(2+) is physiologically important.</text>
</comment>
<comment type="activity regulation">
    <text evidence="5">30S ribosomal subunit binding to Shine-Dalgarno sequences blocks exonuclease activity.</text>
</comment>
<comment type="biophysicochemical properties">
    <kinetics>
        <KM evidence="12">0.47 uM for exonuclease on 30 nt RNA hybridized to 17 nt quenching DNA, J1 alone</KM>
        <KM evidence="12">0.22 uM for exonuclease on 30 nt RNA hybridized to 17 nt quenching DNA, J1/J2 complex</KM>
        <text>kcat is 0.58 sec(-1) for J1, 0.13 sec(-1) for J1/J2 and &lt;0.005 sec(-1) for J2.</text>
    </kinetics>
</comment>
<comment type="subunit">
    <text evidence="10 12 13 14 15 17">Unclear whether it forms homodimers or belongs to a larger complex. According to (PubMed:20025672) probably does not form homodimers, while (PubMed:21893285) shows homodimer formation. Both reports show RNase J1 and J2 interaction, probably as a heterotetramer (PubMed:19193632) shows it is a component of a possible RNA degradosome complex composed of rny, rnjA, rnjB, pnp, pfkA and eno, while (PubMed:20025672) finds no evidence of an RNA degradosome complex.</text>
</comment>
<comment type="interaction">
    <interactant intactId="EBI-6415229">
        <id>Q45493</id>
    </interactant>
    <interactant intactId="EBI-6415229">
        <id>Q45493</id>
        <label>rnjA</label>
    </interactant>
    <organismsDiffer>false</organismsDiffer>
    <experiments>5</experiments>
</comment>
<comment type="interaction">
    <interactant intactId="EBI-6415229">
        <id>Q45493</id>
    </interactant>
    <interactant intactId="EBI-6415198">
        <id>O31760</id>
        <label>rnjB</label>
    </interactant>
    <organismsDiffer>false</organismsDiffer>
    <experiments>4</experiments>
</comment>
<comment type="interaction">
    <interactant intactId="EBI-6415229">
        <id>Q45493</id>
    </interactant>
    <interactant intactId="EBI-6415578">
        <id>O31774</id>
        <label>rny</label>
    </interactant>
    <organismsDiffer>false</organismsDiffer>
    <experiments>2</experiments>
</comment>
<comment type="subcellular location">
    <subcellularLocation>
        <location evidence="1 2 3">Cytoplasm</location>
    </subcellularLocation>
    <text>Colocalizes with ribosomes.</text>
</comment>
<comment type="induction">
    <text evidence="20">Part of the rpoY-rnjA operon, transcribed constitutively.</text>
</comment>
<comment type="domain">
    <text evidence="7">The C-terminal domain (residues 450-555) are required for nuclease activity and dimerization.</text>
</comment>
<comment type="disruption phenotype">
    <text evidence="3 4 5 6 8 9 11 18 19 21">Essential. In depletion experiments there is decreased 5'-exonuclease processing of 16S rRNA (PubMed:17512403), decreased accumulation of correctly-sized scRNA (PubMed:17576666), decreased decay of trp mRNA leader (PubMed:18445592), while correct processing of the 5' end of 23S rRNA no longer occurs in the absence of mrnC (PubMed:19880604). While depletion/deletion of RNase J1 or J2 has no large impact on global gene expression, a double mutant alters the expression of hundreds of genes (PubMed:18713320). In a more severe depletion experiment alteration of about 30% of transcripts was seen (PubMed:22412379). Later shown not to be essential in 4 strains, with a tripled doubling time. 168 trpC2 cells able to grow on minimal medium. Loss of competence for plasmid transformation, nearly complete loss of sporulation, poor growth at 30 degrees Celsius and no growth under 25 degrees Celsius. Increased sensitivity to a wide range of antibiotics. Irregularly shaped cells form clumps of spiral cells connected by long chains, with few visible septa, cell walls are altered with looser, less dense peptidoglycan. Double pnp-rnjA or rnjA-rny mutants could not be isolated (PubMed:23504012). Increased half-life of both RNAs of the type I toxin-antitoxin system BsrE/SR5 (PubMed:26940229).</text>
</comment>
<comment type="miscellaneous">
    <text>Present in about 2500 monomers per cell in mid-log phase.</text>
</comment>
<comment type="similarity">
    <text evidence="1">Belongs to the metallo-beta-lactamase superfamily. RNA-metabolizing metallo-beta-lactamase-like family. Bacterial RNase J subfamily.</text>
</comment>
<accession>Q45493</accession>
<dbReference type="EC" id="3.1.-.-" evidence="1"/>
<dbReference type="EMBL" id="AF012285">
    <property type="protein sequence ID" value="AAC24928.1"/>
    <property type="molecule type" value="Genomic_DNA"/>
</dbReference>
<dbReference type="EMBL" id="AL009126">
    <property type="protein sequence ID" value="CAB13326.1"/>
    <property type="molecule type" value="Genomic_DNA"/>
</dbReference>
<dbReference type="PIR" id="B69862">
    <property type="entry name" value="B69862"/>
</dbReference>
<dbReference type="RefSeq" id="NP_389336.1">
    <property type="nucleotide sequence ID" value="NC_000964.3"/>
</dbReference>
<dbReference type="RefSeq" id="WP_003245660.1">
    <property type="nucleotide sequence ID" value="NZ_OZ025638.1"/>
</dbReference>
<dbReference type="PDB" id="3ZQ4">
    <property type="method" value="X-ray"/>
    <property type="resolution" value="3.00 A"/>
    <property type="chains" value="A/C/D/E=1-555"/>
</dbReference>
<dbReference type="PDBsum" id="3ZQ4"/>
<dbReference type="SMR" id="Q45493"/>
<dbReference type="DIP" id="DIP-46392N"/>
<dbReference type="FunCoup" id="Q45493">
    <property type="interactions" value="269"/>
</dbReference>
<dbReference type="IntAct" id="Q45493">
    <property type="interactions" value="3"/>
</dbReference>
<dbReference type="MINT" id="Q45493"/>
<dbReference type="STRING" id="224308.BSU14530"/>
<dbReference type="jPOST" id="Q45493"/>
<dbReference type="PaxDb" id="224308-BSU14530"/>
<dbReference type="EnsemblBacteria" id="CAB13326">
    <property type="protein sequence ID" value="CAB13326"/>
    <property type="gene ID" value="BSU_14530"/>
</dbReference>
<dbReference type="GeneID" id="86874041"/>
<dbReference type="GeneID" id="939483"/>
<dbReference type="KEGG" id="bsu:BSU14530"/>
<dbReference type="PATRIC" id="fig|224308.179.peg.1583"/>
<dbReference type="eggNOG" id="COG0595">
    <property type="taxonomic scope" value="Bacteria"/>
</dbReference>
<dbReference type="InParanoid" id="Q45493"/>
<dbReference type="OrthoDB" id="9758375at2"/>
<dbReference type="PhylomeDB" id="Q45493"/>
<dbReference type="BioCyc" id="BSUB:BSU14530-MONOMER"/>
<dbReference type="SABIO-RK" id="Q45493"/>
<dbReference type="EvolutionaryTrace" id="Q45493"/>
<dbReference type="Proteomes" id="UP000001570">
    <property type="component" value="Chromosome"/>
</dbReference>
<dbReference type="GO" id="GO:0005737">
    <property type="term" value="C:cytoplasm"/>
    <property type="evidence" value="ECO:0007669"/>
    <property type="project" value="UniProtKB-SubCell"/>
</dbReference>
<dbReference type="GO" id="GO:0004534">
    <property type="term" value="F:5'-3' RNA exonuclease activity"/>
    <property type="evidence" value="ECO:0000314"/>
    <property type="project" value="UniProtKB"/>
</dbReference>
<dbReference type="GO" id="GO:0042802">
    <property type="term" value="F:identical protein binding"/>
    <property type="evidence" value="ECO:0000353"/>
    <property type="project" value="IntAct"/>
</dbReference>
<dbReference type="GO" id="GO:0003723">
    <property type="term" value="F:RNA binding"/>
    <property type="evidence" value="ECO:0007669"/>
    <property type="project" value="UniProtKB-UniRule"/>
</dbReference>
<dbReference type="GO" id="GO:0004521">
    <property type="term" value="F:RNA endonuclease activity"/>
    <property type="evidence" value="ECO:0000314"/>
    <property type="project" value="UniProtKB"/>
</dbReference>
<dbReference type="GO" id="GO:0008270">
    <property type="term" value="F:zinc ion binding"/>
    <property type="evidence" value="ECO:0007669"/>
    <property type="project" value="InterPro"/>
</dbReference>
<dbReference type="GO" id="GO:0006397">
    <property type="term" value="P:mRNA processing"/>
    <property type="evidence" value="ECO:0000314"/>
    <property type="project" value="UniProtKB"/>
</dbReference>
<dbReference type="GO" id="GO:0006364">
    <property type="term" value="P:rRNA processing"/>
    <property type="evidence" value="ECO:0000314"/>
    <property type="project" value="UniProtKB"/>
</dbReference>
<dbReference type="CDD" id="cd07714">
    <property type="entry name" value="RNaseJ_MBL-fold"/>
    <property type="match status" value="1"/>
</dbReference>
<dbReference type="FunFam" id="3.10.20.580:FF:000001">
    <property type="entry name" value="Ribonuclease J"/>
    <property type="match status" value="1"/>
</dbReference>
<dbReference type="FunFam" id="3.40.50.10710:FF:000001">
    <property type="entry name" value="Ribonuclease J"/>
    <property type="match status" value="1"/>
</dbReference>
<dbReference type="Gene3D" id="3.10.20.580">
    <property type="match status" value="1"/>
</dbReference>
<dbReference type="Gene3D" id="3.40.50.10710">
    <property type="entry name" value="Metallo-hydrolase/oxidoreductase"/>
    <property type="match status" value="1"/>
</dbReference>
<dbReference type="Gene3D" id="3.60.15.10">
    <property type="entry name" value="Ribonuclease Z/Hydroxyacylglutathione hydrolase-like"/>
    <property type="match status" value="1"/>
</dbReference>
<dbReference type="HAMAP" id="MF_01491">
    <property type="entry name" value="RNase_J_bact"/>
    <property type="match status" value="1"/>
</dbReference>
<dbReference type="InterPro" id="IPR001279">
    <property type="entry name" value="Metallo-B-lactamas"/>
</dbReference>
<dbReference type="InterPro" id="IPR036866">
    <property type="entry name" value="RibonucZ/Hydroxyglut_hydro"/>
</dbReference>
<dbReference type="InterPro" id="IPR011108">
    <property type="entry name" value="RMMBL"/>
</dbReference>
<dbReference type="InterPro" id="IPR004613">
    <property type="entry name" value="RNase_J"/>
</dbReference>
<dbReference type="InterPro" id="IPR042173">
    <property type="entry name" value="RNase_J_2"/>
</dbReference>
<dbReference type="InterPro" id="IPR055132">
    <property type="entry name" value="RNase_J_b_CASP"/>
</dbReference>
<dbReference type="InterPro" id="IPR030854">
    <property type="entry name" value="RNase_J_bac"/>
</dbReference>
<dbReference type="InterPro" id="IPR041636">
    <property type="entry name" value="RNase_J_C"/>
</dbReference>
<dbReference type="InterPro" id="IPR001587">
    <property type="entry name" value="RNase_J_CS"/>
</dbReference>
<dbReference type="NCBIfam" id="TIGR00649">
    <property type="entry name" value="MG423"/>
    <property type="match status" value="1"/>
</dbReference>
<dbReference type="NCBIfam" id="NF047419">
    <property type="entry name" value="RNase_J1_RnjA"/>
    <property type="match status" value="1"/>
</dbReference>
<dbReference type="PANTHER" id="PTHR43694">
    <property type="entry name" value="RIBONUCLEASE J"/>
    <property type="match status" value="1"/>
</dbReference>
<dbReference type="PANTHER" id="PTHR43694:SF1">
    <property type="entry name" value="RIBONUCLEASE J"/>
    <property type="match status" value="1"/>
</dbReference>
<dbReference type="Pfam" id="PF00753">
    <property type="entry name" value="Lactamase_B"/>
    <property type="match status" value="1"/>
</dbReference>
<dbReference type="Pfam" id="PF07521">
    <property type="entry name" value="RMMBL"/>
    <property type="match status" value="1"/>
</dbReference>
<dbReference type="Pfam" id="PF22505">
    <property type="entry name" value="RNase_J_b_CASP"/>
    <property type="match status" value="1"/>
</dbReference>
<dbReference type="Pfam" id="PF17770">
    <property type="entry name" value="RNase_J_C"/>
    <property type="match status" value="1"/>
</dbReference>
<dbReference type="PIRSF" id="PIRSF004803">
    <property type="entry name" value="RnjA"/>
    <property type="match status" value="1"/>
</dbReference>
<dbReference type="SMART" id="SM00849">
    <property type="entry name" value="Lactamase_B"/>
    <property type="match status" value="1"/>
</dbReference>
<dbReference type="SUPFAM" id="SSF56281">
    <property type="entry name" value="Metallo-hydrolase/oxidoreductase"/>
    <property type="match status" value="1"/>
</dbReference>
<dbReference type="PROSITE" id="PS01292">
    <property type="entry name" value="UPF0036"/>
    <property type="match status" value="1"/>
</dbReference>
<gene>
    <name evidence="1" type="primary">rnjA</name>
    <name type="synonym">ykqC</name>
    <name type="ordered locus">BSU14530</name>
</gene>
<reference key="1">
    <citation type="journal article" date="1996" name="Microbiology">
        <title>The ampS-nprE (124 degrees-127 degrees) region of the Bacillus subtilis 168 chromosome: sequencing of a 27 kb segment and identification of several genes in the area.</title>
        <authorList>
            <person name="Winters P."/>
            <person name="Caldwell R.M."/>
            <person name="Enfield L."/>
            <person name="Ferrari E."/>
        </authorList>
    </citation>
    <scope>NUCLEOTIDE SEQUENCE [GENOMIC DNA]</scope>
    <source>
        <strain>168</strain>
    </source>
</reference>
<reference key="2">
    <citation type="submission" date="1997-07" db="EMBL/GenBank/DDBJ databases">
        <title>Sequence analysis of the mobA-ampS region of the Bacillus subtilis chromosome.</title>
        <authorList>
            <person name="Caldwell R.M."/>
            <person name="Ferrari E."/>
        </authorList>
    </citation>
    <scope>NUCLEOTIDE SEQUENCE [GENOMIC DNA]</scope>
    <source>
        <strain>168</strain>
    </source>
</reference>
<reference key="3">
    <citation type="journal article" date="1997" name="Nature">
        <title>The complete genome sequence of the Gram-positive bacterium Bacillus subtilis.</title>
        <authorList>
            <person name="Kunst F."/>
            <person name="Ogasawara N."/>
            <person name="Moszer I."/>
            <person name="Albertini A.M."/>
            <person name="Alloni G."/>
            <person name="Azevedo V."/>
            <person name="Bertero M.G."/>
            <person name="Bessieres P."/>
            <person name="Bolotin A."/>
            <person name="Borchert S."/>
            <person name="Borriss R."/>
            <person name="Boursier L."/>
            <person name="Brans A."/>
            <person name="Braun M."/>
            <person name="Brignell S.C."/>
            <person name="Bron S."/>
            <person name="Brouillet S."/>
            <person name="Bruschi C.V."/>
            <person name="Caldwell B."/>
            <person name="Capuano V."/>
            <person name="Carter N.M."/>
            <person name="Choi S.-K."/>
            <person name="Codani J.-J."/>
            <person name="Connerton I.F."/>
            <person name="Cummings N.J."/>
            <person name="Daniel R.A."/>
            <person name="Denizot F."/>
            <person name="Devine K.M."/>
            <person name="Duesterhoeft A."/>
            <person name="Ehrlich S.D."/>
            <person name="Emmerson P.T."/>
            <person name="Entian K.-D."/>
            <person name="Errington J."/>
            <person name="Fabret C."/>
            <person name="Ferrari E."/>
            <person name="Foulger D."/>
            <person name="Fritz C."/>
            <person name="Fujita M."/>
            <person name="Fujita Y."/>
            <person name="Fuma S."/>
            <person name="Galizzi A."/>
            <person name="Galleron N."/>
            <person name="Ghim S.-Y."/>
            <person name="Glaser P."/>
            <person name="Goffeau A."/>
            <person name="Golightly E.J."/>
            <person name="Grandi G."/>
            <person name="Guiseppi G."/>
            <person name="Guy B.J."/>
            <person name="Haga K."/>
            <person name="Haiech J."/>
            <person name="Harwood C.R."/>
            <person name="Henaut A."/>
            <person name="Hilbert H."/>
            <person name="Holsappel S."/>
            <person name="Hosono S."/>
            <person name="Hullo M.-F."/>
            <person name="Itaya M."/>
            <person name="Jones L.-M."/>
            <person name="Joris B."/>
            <person name="Karamata D."/>
            <person name="Kasahara Y."/>
            <person name="Klaerr-Blanchard M."/>
            <person name="Klein C."/>
            <person name="Kobayashi Y."/>
            <person name="Koetter P."/>
            <person name="Koningstein G."/>
            <person name="Krogh S."/>
            <person name="Kumano M."/>
            <person name="Kurita K."/>
            <person name="Lapidus A."/>
            <person name="Lardinois S."/>
            <person name="Lauber J."/>
            <person name="Lazarevic V."/>
            <person name="Lee S.-M."/>
            <person name="Levine A."/>
            <person name="Liu H."/>
            <person name="Masuda S."/>
            <person name="Mauel C."/>
            <person name="Medigue C."/>
            <person name="Medina N."/>
            <person name="Mellado R.P."/>
            <person name="Mizuno M."/>
            <person name="Moestl D."/>
            <person name="Nakai S."/>
            <person name="Noback M."/>
            <person name="Noone D."/>
            <person name="O'Reilly M."/>
            <person name="Ogawa K."/>
            <person name="Ogiwara A."/>
            <person name="Oudega B."/>
            <person name="Park S.-H."/>
            <person name="Parro V."/>
            <person name="Pohl T.M."/>
            <person name="Portetelle D."/>
            <person name="Porwollik S."/>
            <person name="Prescott A.M."/>
            <person name="Presecan E."/>
            <person name="Pujic P."/>
            <person name="Purnelle B."/>
            <person name="Rapoport G."/>
            <person name="Rey M."/>
            <person name="Reynolds S."/>
            <person name="Rieger M."/>
            <person name="Rivolta C."/>
            <person name="Rocha E."/>
            <person name="Roche B."/>
            <person name="Rose M."/>
            <person name="Sadaie Y."/>
            <person name="Sato T."/>
            <person name="Scanlan E."/>
            <person name="Schleich S."/>
            <person name="Schroeter R."/>
            <person name="Scoffone F."/>
            <person name="Sekiguchi J."/>
            <person name="Sekowska A."/>
            <person name="Seror S.J."/>
            <person name="Serror P."/>
            <person name="Shin B.-S."/>
            <person name="Soldo B."/>
            <person name="Sorokin A."/>
            <person name="Tacconi E."/>
            <person name="Takagi T."/>
            <person name="Takahashi H."/>
            <person name="Takemaru K."/>
            <person name="Takeuchi M."/>
            <person name="Tamakoshi A."/>
            <person name="Tanaka T."/>
            <person name="Terpstra P."/>
            <person name="Tognoni A."/>
            <person name="Tosato V."/>
            <person name="Uchiyama S."/>
            <person name="Vandenbol M."/>
            <person name="Vannier F."/>
            <person name="Vassarotti A."/>
            <person name="Viari A."/>
            <person name="Wambutt R."/>
            <person name="Wedler E."/>
            <person name="Wedler H."/>
            <person name="Weitzenegger T."/>
            <person name="Winters P."/>
            <person name="Wipat A."/>
            <person name="Yamamoto H."/>
            <person name="Yamane K."/>
            <person name="Yasumoto K."/>
            <person name="Yata K."/>
            <person name="Yoshida K."/>
            <person name="Yoshikawa H.-F."/>
            <person name="Zumstein E."/>
            <person name="Yoshikawa H."/>
            <person name="Danchin A."/>
        </authorList>
    </citation>
    <scope>NUCLEOTIDE SEQUENCE [LARGE SCALE GENOMIC DNA]</scope>
    <source>
        <strain>168</strain>
    </source>
</reference>
<reference key="4">
    <citation type="journal article" date="2005" name="Nucleic Acids Res.">
        <title>Ribonucleases J1 and J2: two novel endoribonucleases in B.subtilis with functional homology to E.coli RNase E.</title>
        <authorList>
            <person name="Even S."/>
            <person name="Pellegrini O."/>
            <person name="Zig L."/>
            <person name="Labas V."/>
            <person name="Vinh J."/>
            <person name="Brechemmier-Baey D."/>
            <person name="Putzer H."/>
        </authorList>
    </citation>
    <scope>FUNCTION AS AN ENDONUCLEASE</scope>
    <scope>COFACTOR</scope>
    <scope>SUBCELLULAR LOCATION</scope>
    <scope>IDENTIFICATION BY MASS SPECTROMETRY</scope>
    <source>
        <strain>168</strain>
    </source>
</reference>
<reference key="5">
    <citation type="journal article" date="2006" name="Microbiology">
        <title>Functional analysis of 11 putative essential genes in Bacillus subtilis.</title>
        <authorList>
            <person name="Hunt A."/>
            <person name="Rawlins J.P."/>
            <person name="Thomaides H.B."/>
            <person name="Errington J."/>
        </authorList>
    </citation>
    <scope>SUBCELLULAR LOCATION</scope>
    <scope>DISRUPTION PHENOTYPE</scope>
    <source>
        <strain>168</strain>
    </source>
</reference>
<reference key="6">
    <citation type="journal article" date="2007" name="Cell">
        <title>5'-to-3' exoribonuclease activity in bacteria: role of RNase J1 in rRNA maturation and 5' stability of mRNA.</title>
        <authorList>
            <person name="Mathy N."/>
            <person name="Benard L."/>
            <person name="Pellegrini O."/>
            <person name="Daou R."/>
            <person name="Wen T."/>
            <person name="Condon C."/>
        </authorList>
    </citation>
    <scope>FUNCTION AS AN EXONUCLEASE</scope>
    <scope>ACTIVITY REGULATION</scope>
    <scope>DISRUPTION PHENOTYPE</scope>
    <scope>MUTAGENESIS OF HIS-76</scope>
</reference>
<reference key="7">
    <citation type="journal article" date="2007" name="Mol. Microbiol.">
        <title>Maturation of the 5' end of Bacillus subtilis 16S rRNA by the essential ribonuclease YkqC/RNase J1.</title>
        <authorList>
            <person name="Britton R.A."/>
            <person name="Wen T."/>
            <person name="Schaefer L."/>
            <person name="Pellegrini O."/>
            <person name="Uicker W.C."/>
            <person name="Mathy N."/>
            <person name="Tobin C."/>
            <person name="Daou R."/>
            <person name="Szyk J."/>
            <person name="Condon C."/>
        </authorList>
    </citation>
    <scope>FUNCTION</scope>
    <scope>DISRUPTION PHENOTYPE</scope>
    <scope>MUTAGENESIS OF HIS-76</scope>
    <source>
        <strain>168</strain>
    </source>
</reference>
<reference key="8">
    <citation type="journal article" date="2007" name="Nucleic Acids Res.">
        <title>Processing of Bacillus subtilis small cytoplasmic RNA: evidence for an additional endonuclease cleavage site.</title>
        <authorList>
            <person name="Yao S."/>
            <person name="Blaustein J.B."/>
            <person name="Bechhofer D.H."/>
        </authorList>
    </citation>
    <scope>FUNCTION IN PRE-SCRNA PROCESSING</scope>
    <scope>DISRUPTION PHENOTYPE</scope>
</reference>
<reference key="9">
    <citation type="journal article" date="2008" name="J. Biol. Chem.">
        <title>Role of Bacillus subtilis RNase J1 endonuclease and 5'-exonuclease activities in trp leader RNA turnover.</title>
        <authorList>
            <person name="Deikus G."/>
            <person name="Condon C."/>
            <person name="Bechhofer D.H."/>
        </authorList>
    </citation>
    <scope>FUNCTION IN MRNA DECAY</scope>
    <scope>DISRUPTION PHENOTYPE</scope>
</reference>
<reference key="10">
    <citation type="journal article" date="2008" name="Mol. Microbiol.">
        <title>mRNA processing by RNases J1 and J2 affects Bacillus subtilis gene expression on a global scale.</title>
        <authorList>
            <person name="Mader U."/>
            <person name="Zig L."/>
            <person name="Kretschmer J."/>
            <person name="Homuth G."/>
            <person name="Putzer H."/>
        </authorList>
    </citation>
    <scope>FUNCTION</scope>
    <scope>DISRUPTION PHENOTYPE</scope>
</reference>
<reference key="11">
    <citation type="journal article" date="2008" name="Nat. Struct. Mol. Biol.">
        <title>Structural insights into the dual activity of RNase J.</title>
        <authorList>
            <person name="Li de la Sierra-Gallay I."/>
            <person name="Zig L."/>
            <person name="Jamalli A."/>
            <person name="Putzer H."/>
        </authorList>
    </citation>
    <scope>FUNCTION AS AN ENDONUCLEASE</scope>
    <scope>DOMAIN</scope>
    <scope>MUTAGENESIS OF ASP-45; 78-ASP-HIS-79; ASN-337 AND SER-366</scope>
</reference>
<reference key="12">
    <citation type="journal article" date="2009" name="Mol. Cell. Proteomics">
        <title>Novel activities of glycolytic enzymes in Bacillus subtilis: interactions with essential proteins involved in mRNA processing.</title>
        <authorList>
            <person name="Commichau F.M."/>
            <person name="Rothe F.M."/>
            <person name="Herzberg C."/>
            <person name="Wagner E."/>
            <person name="Hellwig D."/>
            <person name="Lehnik-Habrink M."/>
            <person name="Hammer E."/>
            <person name="Volker U."/>
            <person name="Stulke J."/>
        </authorList>
    </citation>
    <scope>SUBUNIT</scope>
    <source>
        <strain>168</strain>
    </source>
</reference>
<reference key="13">
    <citation type="journal article" date="2010" name="J. Bacteriol.">
        <title>Maturation of 23S rRNA in Bacillus subtilis in the absence of Mini-III.</title>
        <authorList>
            <person name="Redko Y."/>
            <person name="Condon C."/>
        </authorList>
    </citation>
    <scope>FUNCTION IN 23S RRNA PROCESSING</scope>
    <scope>RNASE ACTIVITY</scope>
    <scope>DISRUPTION PHENOTYPE</scope>
</reference>
<reference key="14">
    <citation type="journal article" date="2010" name="Mol. Microbiol.">
        <title>Bacillus subtilis ribonucleases J1 and J2 form a complex with altered enzyme behaviour.</title>
        <authorList>
            <person name="Mathy N."/>
            <person name="Hebert A."/>
            <person name="Mervelet P."/>
            <person name="Benard L."/>
            <person name="Dorleans A."/>
            <person name="Li de la Sierra-Gallay I."/>
            <person name="Noirot P."/>
            <person name="Putzer H."/>
            <person name="Condon C."/>
        </authorList>
    </citation>
    <scope>FUNCTION</scope>
    <scope>BIOPHYSICOCHEMICAL PROPERTIES</scope>
    <scope>INTERACTION WITH RNASE J2</scope>
    <scope>SUBUNIT</scope>
    <source>
        <strain>168</strain>
    </source>
</reference>
<reference key="15">
    <citation type="journal article" date="2011" name="J. Bacteriol.">
        <title>RNase Y in Bacillus subtilis: a natively disordered protein that is the functional equivalent of RNase E from Escherichia coli.</title>
        <authorList>
            <person name="Lehnik-Habrink M."/>
            <person name="Newman J."/>
            <person name="Rothe F.M."/>
            <person name="Solovyova A.S."/>
            <person name="Rodrigues C."/>
            <person name="Herzberg C."/>
            <person name="Commichau F.M."/>
            <person name="Lewis R.J."/>
            <person name="Stulke J."/>
        </authorList>
    </citation>
    <scope>INTERACTION WITH RNY</scope>
    <scope>SUBUNIT</scope>
    <source>
        <strain>168</strain>
    </source>
</reference>
<reference key="16">
    <citation type="journal article" date="2011" name="Mol. Microbiol.">
        <title>Mycobacterium smegmatis RNase J is a 5'-3' exo-/endoribonuclease and both RNase J and RNase E are involved in ribosomal RNA maturation.</title>
        <authorList>
            <person name="Taverniti V."/>
            <person name="Forti F."/>
            <person name="Ghisotti D."/>
            <person name="Putzer H."/>
        </authorList>
    </citation>
    <scope>FUNCTION</scope>
</reference>
<reference key="17">
    <citation type="journal article" date="2011" name="Structure">
        <title>Molecular basis for the recognition and cleavage of RNA by the bifunctional 5'-3' exo/endoribonuclease RNase J.</title>
        <authorList>
            <person name="Dorleans A."/>
            <person name="Li de la Sierra-Gallay I."/>
            <person name="Piton J."/>
            <person name="Zig L."/>
            <person name="Gilet L."/>
            <person name="Putzer H."/>
            <person name="Condon C."/>
        </authorList>
    </citation>
    <scope>FUNCTION</scope>
    <scope>INTERACTION WITH RNASE J2</scope>
    <scope>SUBUNIT</scope>
</reference>
<reference key="18">
    <citation type="journal article" date="2012" name="J. Mol. Biol.">
        <title>Dissection of the network of interactions that links RNA processing with glycolysis in the Bacillus subtilis degradosome.</title>
        <authorList>
            <person name="Newman J.A."/>
            <person name="Hewitt L."/>
            <person name="Rodrigues C."/>
            <person name="Solovyova A.S."/>
            <person name="Harwood C.R."/>
            <person name="Lewis R.J."/>
        </authorList>
    </citation>
    <scope>INTERACTION WITH PNP</scope>
    <scope>SUBUNIT</scope>
    <source>
        <strain>168</strain>
    </source>
</reference>
<reference key="19">
    <citation type="journal article" date="2012" name="PLoS Genet.">
        <title>Three essential ribonucleases-RNase Y, J1, and III-control the abundance of a majority of Bacillus subtilis mRNAs.</title>
        <authorList>
            <person name="Durand S."/>
            <person name="Gilet L."/>
            <person name="Bessieres P."/>
            <person name="Nicolas P."/>
            <person name="Condon C."/>
        </authorList>
    </citation>
    <scope>FUNCTION</scope>
    <scope>DISRUPTION PHENOTYPE</scope>
    <source>
        <strain>168</strain>
    </source>
</reference>
<reference key="20">
    <citation type="journal article" date="2013" name="J. Bacteriol.">
        <title>Bacillus subtilis mutants with knockouts of the genes encoding ribonucleases RNase Y and RNase J1 are viable, with major defects in cell morphology, sporulation, and competence.</title>
        <authorList>
            <person name="Figaro S."/>
            <person name="Durand S."/>
            <person name="Gilet L."/>
            <person name="Cayet N."/>
            <person name="Sachse M."/>
            <person name="Condon C."/>
        </authorList>
    </citation>
    <scope>FUNCTION</scope>
    <scope>DISRUPTION PHENOTYPE</scope>
    <source>
        <strain>168 / JH642</strain>
        <strain>168 / PY79</strain>
        <strain>168 / W168</strain>
        <strain>168 trpC2</strain>
    </source>
</reference>
<reference key="21">
    <citation type="journal article" date="2014" name="J. Bacteriol.">
        <title>epsilon, a new subunit of RNA polymerase found in gram-positive bacteria.</title>
        <authorList>
            <person name="Keller A.N."/>
            <person name="Yang X."/>
            <person name="Wiedermannova J."/>
            <person name="Delumeau O."/>
            <person name="Krasny L."/>
            <person name="Lewis P.J."/>
        </authorList>
    </citation>
    <scope>INDUCTION</scope>
    <source>
        <strain>168 / BSB1</strain>
    </source>
</reference>
<reference key="22">
    <citation type="journal article" date="2016" name="RNA Biol.">
        <title>A multistress responsive type I toxin-antitoxin system: bsrE/SR5 from the B. subtilis chromosome.</title>
        <authorList>
            <person name="Mueller P."/>
            <person name="Jahn N."/>
            <person name="Ring C."/>
            <person name="Maiwald C."/>
            <person name="Neubert R."/>
            <person name="Meissner C."/>
            <person name="Brantl S."/>
        </authorList>
    </citation>
    <scope>FUNCTION IN TYPE I TOXIN-ANTITOXIN BSRE/SR5 DEGRADATION</scope>
    <scope>DISRUPTION PHENOTYPE</scope>
    <source>
        <strain>168 / DB104</strain>
    </source>
</reference>
<reference key="23">
    <citation type="journal article" date="2011" name="Structure">
        <title>Unusual, dual endo- and exonuclease activity in the degradosome explained by crystal structure analysis of RNase J1.</title>
        <authorList>
            <person name="Newman J.A."/>
            <person name="Hewitt L."/>
            <person name="Rodrigues C."/>
            <person name="Solovyova A."/>
            <person name="Harwood C.R."/>
            <person name="Lewis R.J."/>
        </authorList>
    </citation>
    <scope>X-RAY CRYSTALLOGRAPHY (3.0 ANGSTROMS) IN OPEN CONFORMATION</scope>
    <scope>ACTIVE SITE</scope>
    <scope>DISCUSSION OF MECHANISM</scope>
    <scope>SUBUNIT</scope>
    <source>
        <strain>168</strain>
    </source>
</reference>
<feature type="chain" id="PRO_0000215268" description="Ribonuclease J1">
    <location>
        <begin position="1"/>
        <end position="555"/>
    </location>
</feature>
<feature type="region of interest" description="Required for endo- and 5'-exonuclease activity and dimerization">
    <location>
        <begin position="450"/>
        <end position="555"/>
    </location>
</feature>
<feature type="active site" description="Proton donor" evidence="22">
    <location>
        <position position="195"/>
    </location>
</feature>
<feature type="active site" description="Proton acceptor" evidence="22">
    <location>
        <position position="368"/>
    </location>
</feature>
<feature type="binding site">
    <location>
        <position position="49"/>
    </location>
    <ligand>
        <name>Ca(2+)</name>
        <dbReference type="ChEBI" id="CHEBI:29108"/>
    </ligand>
</feature>
<feature type="binding site">
    <location>
        <position position="51"/>
    </location>
    <ligand>
        <name>Ca(2+)</name>
        <dbReference type="ChEBI" id="CHEBI:29108"/>
    </ligand>
</feature>
<feature type="binding site">
    <location>
        <position position="74"/>
    </location>
    <ligand>
        <name>Zn(2+)</name>
        <dbReference type="ChEBI" id="CHEBI:29105"/>
        <label>1</label>
        <note>catalytic</note>
    </ligand>
</feature>
<feature type="binding site">
    <location>
        <position position="76"/>
    </location>
    <ligand>
        <name>Zn(2+)</name>
        <dbReference type="ChEBI" id="CHEBI:29105"/>
        <label>1</label>
        <note>catalytic</note>
    </ligand>
</feature>
<feature type="binding site">
    <location>
        <position position="78"/>
    </location>
    <ligand>
        <name>Zn(2+)</name>
        <dbReference type="ChEBI" id="CHEBI:29105"/>
        <label>2</label>
        <note>catalytic</note>
    </ligand>
</feature>
<feature type="binding site">
    <location>
        <position position="79"/>
    </location>
    <ligand>
        <name>Zn(2+)</name>
        <dbReference type="ChEBI" id="CHEBI:29105"/>
        <label>2</label>
        <note>catalytic</note>
    </ligand>
</feature>
<feature type="binding site">
    <location>
        <position position="142"/>
    </location>
    <ligand>
        <name>Zn(2+)</name>
        <dbReference type="ChEBI" id="CHEBI:29105"/>
        <label>1</label>
        <note>catalytic</note>
    </ligand>
</feature>
<feature type="binding site">
    <location>
        <position position="164"/>
    </location>
    <ligand>
        <name>Zn(2+)</name>
        <dbReference type="ChEBI" id="CHEBI:29105"/>
        <label>1</label>
        <note>catalytic</note>
    </ligand>
</feature>
<feature type="binding site">
    <location>
        <position position="164"/>
    </location>
    <ligand>
        <name>Zn(2+)</name>
        <dbReference type="ChEBI" id="CHEBI:29105"/>
        <label>2</label>
        <note>catalytic</note>
    </ligand>
</feature>
<feature type="binding site" evidence="1">
    <location>
        <begin position="364"/>
        <end position="368"/>
    </location>
    <ligand>
        <name>substrate</name>
    </ligand>
</feature>
<feature type="binding site">
    <location>
        <position position="390"/>
    </location>
    <ligand>
        <name>Zn(2+)</name>
        <dbReference type="ChEBI" id="CHEBI:29105"/>
        <label>2</label>
        <note>catalytic</note>
    </ligand>
</feature>
<feature type="binding site">
    <location>
        <position position="443"/>
    </location>
    <ligand>
        <name>Ca(2+)</name>
        <dbReference type="ChEBI" id="CHEBI:29108"/>
    </ligand>
</feature>
<feature type="mutagenesis site" description="Slight decrease in endonuclease and 10-fold decrease in 5'-exonuclease activity; when associated with A-337." evidence="7">
    <original>D</original>
    <variation>A</variation>
    <location>
        <position position="45"/>
    </location>
</feature>
<feature type="mutagenesis site" description="Loss of endo- and 5'-exonuclease activity." evidence="4 5">
    <original>H</original>
    <variation>A</variation>
    <location>
        <position position="76"/>
    </location>
</feature>
<feature type="mutagenesis site" description="Severe loss of endo- and 5'-exonuclease activity." evidence="7">
    <original>DH</original>
    <variation>KA</variation>
    <location>
        <begin position="78"/>
        <end position="79"/>
    </location>
</feature>
<feature type="mutagenesis site" description="Slight decrease in endonuclease and 10-fold decrease in 5'-exonuclease activity; when associated with A-45." evidence="7">
    <original>N</original>
    <variation>A</variation>
    <location>
        <position position="337"/>
    </location>
</feature>
<feature type="mutagenesis site" description="30% endonuclease and 10% 5'-exonuclease activity." evidence="7">
    <original>S</original>
    <variation>L</variation>
    <location>
        <position position="366"/>
    </location>
</feature>
<feature type="strand" evidence="23">
    <location>
        <begin position="8"/>
        <end position="21"/>
    </location>
</feature>
<feature type="strand" evidence="23">
    <location>
        <begin position="24"/>
        <end position="29"/>
    </location>
</feature>
<feature type="strand" evidence="23">
    <location>
        <begin position="32"/>
        <end position="38"/>
    </location>
</feature>
<feature type="strand" evidence="23">
    <location>
        <begin position="51"/>
        <end position="55"/>
    </location>
</feature>
<feature type="helix" evidence="23">
    <location>
        <begin position="58"/>
        <end position="61"/>
    </location>
</feature>
<feature type="turn" evidence="23">
    <location>
        <begin position="62"/>
        <end position="66"/>
    </location>
</feature>
<feature type="strand" evidence="23">
    <location>
        <begin position="67"/>
        <end position="73"/>
    </location>
</feature>
<feature type="helix" evidence="23">
    <location>
        <begin position="77"/>
        <end position="80"/>
    </location>
</feature>
<feature type="helix" evidence="23">
    <location>
        <begin position="83"/>
        <end position="87"/>
    </location>
</feature>
<feature type="strand" evidence="23">
    <location>
        <begin position="94"/>
        <end position="96"/>
    </location>
</feature>
<feature type="helix" evidence="23">
    <location>
        <begin position="98"/>
        <end position="111"/>
    </location>
</feature>
<feature type="turn" evidence="23">
    <location>
        <begin position="113"/>
        <end position="116"/>
    </location>
</feature>
<feature type="strand" evidence="23">
    <location>
        <begin position="119"/>
        <end position="121"/>
    </location>
</feature>
<feature type="strand" evidence="23">
    <location>
        <begin position="128"/>
        <end position="130"/>
    </location>
</feature>
<feature type="strand" evidence="23">
    <location>
        <begin position="133"/>
        <end position="141"/>
    </location>
</feature>
<feature type="strand" evidence="23">
    <location>
        <begin position="143"/>
        <end position="154"/>
    </location>
</feature>
<feature type="strand" evidence="23">
    <location>
        <begin position="157"/>
        <end position="161"/>
    </location>
</feature>
<feature type="strand" evidence="23">
    <location>
        <begin position="172"/>
        <end position="174"/>
    </location>
</feature>
<feature type="helix" evidence="23">
    <location>
        <begin position="178"/>
        <end position="186"/>
    </location>
</feature>
<feature type="strand" evidence="23">
    <location>
        <begin position="189"/>
        <end position="195"/>
    </location>
</feature>
<feature type="turn" evidence="23">
    <location>
        <begin position="197"/>
        <end position="200"/>
    </location>
</feature>
<feature type="helix" evidence="23">
    <location>
        <begin position="208"/>
        <end position="221"/>
    </location>
</feature>
<feature type="strand" evidence="23">
    <location>
        <begin position="226"/>
        <end position="229"/>
    </location>
</feature>
<feature type="helix" evidence="23">
    <location>
        <begin position="235"/>
        <end position="246"/>
    </location>
</feature>
<feature type="turn" evidence="23">
    <location>
        <begin position="247"/>
        <end position="249"/>
    </location>
</feature>
<feature type="strand" evidence="23">
    <location>
        <begin position="251"/>
        <end position="256"/>
    </location>
</feature>
<feature type="helix" evidence="23">
    <location>
        <begin position="257"/>
        <end position="267"/>
    </location>
</feature>
<feature type="helix" evidence="23">
    <location>
        <begin position="268"/>
        <end position="270"/>
    </location>
</feature>
<feature type="helix" evidence="23">
    <location>
        <begin position="276"/>
        <end position="278"/>
    </location>
</feature>
<feature type="helix" evidence="23">
    <location>
        <begin position="282"/>
        <end position="284"/>
    </location>
</feature>
<feature type="turn" evidence="23">
    <location>
        <begin position="285"/>
        <end position="287"/>
    </location>
</feature>
<feature type="helix" evidence="23">
    <location>
        <begin position="290"/>
        <end position="292"/>
    </location>
</feature>
<feature type="strand" evidence="23">
    <location>
        <begin position="293"/>
        <end position="297"/>
    </location>
</feature>
<feature type="helix" evidence="23">
    <location>
        <begin position="307"/>
        <end position="312"/>
    </location>
</feature>
<feature type="strand" evidence="23">
    <location>
        <begin position="326"/>
        <end position="329"/>
    </location>
</feature>
<feature type="helix" evidence="23">
    <location>
        <begin position="338"/>
        <end position="350"/>
    </location>
</feature>
<feature type="strand" evidence="23">
    <location>
        <begin position="354"/>
        <end position="356"/>
    </location>
</feature>
<feature type="strand" evidence="23">
    <location>
        <begin position="358"/>
        <end position="361"/>
    </location>
</feature>
<feature type="helix" evidence="23">
    <location>
        <begin position="371"/>
        <end position="380"/>
    </location>
</feature>
<feature type="strand" evidence="23">
    <location>
        <begin position="383"/>
        <end position="391"/>
    </location>
</feature>
<feature type="helix" evidence="23">
    <location>
        <begin position="393"/>
        <end position="405"/>
    </location>
</feature>
<feature type="helix" evidence="23">
    <location>
        <begin position="410"/>
        <end position="412"/>
    </location>
</feature>
<feature type="strand" evidence="23">
    <location>
        <begin position="421"/>
        <end position="425"/>
    </location>
</feature>
<feature type="strand" evidence="23">
    <location>
        <begin position="428"/>
        <end position="431"/>
    </location>
</feature>
<feature type="strand" evidence="23">
    <location>
        <begin position="439"/>
        <end position="443"/>
    </location>
</feature>
<feature type="helix" evidence="23">
    <location>
        <begin position="452"/>
        <end position="464"/>
    </location>
</feature>
<feature type="strand" evidence="23">
    <location>
        <begin position="466"/>
        <end position="473"/>
    </location>
</feature>
<feature type="strand" evidence="23">
    <location>
        <begin position="475"/>
        <end position="477"/>
    </location>
</feature>
<feature type="strand" evidence="23">
    <location>
        <begin position="480"/>
        <end position="492"/>
    </location>
</feature>
<feature type="helix" evidence="23">
    <location>
        <begin position="494"/>
        <end position="497"/>
    </location>
</feature>
<feature type="helix" evidence="23">
    <location>
        <begin position="500"/>
        <end position="516"/>
    </location>
</feature>
<feature type="helix" evidence="23">
    <location>
        <begin position="523"/>
        <end position="542"/>
    </location>
</feature>
<feature type="strand" evidence="23">
    <location>
        <begin position="547"/>
        <end position="554"/>
    </location>
</feature>
<protein>
    <recommendedName>
        <fullName evidence="1">Ribonuclease J1</fullName>
        <shortName evidence="1">RNase J1</shortName>
        <ecNumber evidence="1">3.1.-.-</ecNumber>
    </recommendedName>
</protein>
<keyword id="KW-0002">3D-structure</keyword>
<keyword id="KW-0106">Calcium</keyword>
<keyword id="KW-0963">Cytoplasm</keyword>
<keyword id="KW-0255">Endonuclease</keyword>
<keyword id="KW-0269">Exonuclease</keyword>
<keyword id="KW-0378">Hydrolase</keyword>
<keyword id="KW-0479">Metal-binding</keyword>
<keyword id="KW-0507">mRNA processing</keyword>
<keyword id="KW-0540">Nuclease</keyword>
<keyword id="KW-1185">Reference proteome</keyword>
<keyword id="KW-0694">RNA-binding</keyword>
<keyword id="KW-0698">rRNA processing</keyword>
<keyword id="KW-0862">Zinc</keyword>
<evidence type="ECO:0000255" key="1">
    <source>
        <dbReference type="HAMAP-Rule" id="MF_01491"/>
    </source>
</evidence>
<evidence type="ECO:0000269" key="2">
    <source>
    </source>
</evidence>
<evidence type="ECO:0000269" key="3">
    <source>
    </source>
</evidence>
<evidence type="ECO:0000269" key="4">
    <source>
    </source>
</evidence>
<evidence type="ECO:0000269" key="5">
    <source>
    </source>
</evidence>
<evidence type="ECO:0000269" key="6">
    <source>
    </source>
</evidence>
<evidence type="ECO:0000269" key="7">
    <source>
    </source>
</evidence>
<evidence type="ECO:0000269" key="8">
    <source>
    </source>
</evidence>
<evidence type="ECO:0000269" key="9">
    <source>
    </source>
</evidence>
<evidence type="ECO:0000269" key="10">
    <source>
    </source>
</evidence>
<evidence type="ECO:0000269" key="11">
    <source>
    </source>
</evidence>
<evidence type="ECO:0000269" key="12">
    <source>
    </source>
</evidence>
<evidence type="ECO:0000269" key="13">
    <source>
    </source>
</evidence>
<evidence type="ECO:0000269" key="14">
    <source>
    </source>
</evidence>
<evidence type="ECO:0000269" key="15">
    <source>
    </source>
</evidence>
<evidence type="ECO:0000269" key="16">
    <source>
    </source>
</evidence>
<evidence type="ECO:0000269" key="17">
    <source>
    </source>
</evidence>
<evidence type="ECO:0000269" key="18">
    <source>
    </source>
</evidence>
<evidence type="ECO:0000269" key="19">
    <source>
    </source>
</evidence>
<evidence type="ECO:0000269" key="20">
    <source>
    </source>
</evidence>
<evidence type="ECO:0000269" key="21">
    <source>
    </source>
</evidence>
<evidence type="ECO:0000305" key="22">
    <source>
    </source>
</evidence>
<evidence type="ECO:0007829" key="23">
    <source>
        <dbReference type="PDB" id="3ZQ4"/>
    </source>
</evidence>
<proteinExistence type="evidence at protein level"/>
<sequence length="555" mass="61517">MKFVKNDQTAVFALGGLGEIGKNTYAVQFQDEIVLIDAGIKFPEDELLGIDYVIPDYTYLVKNEDKIKGLFITHGHEDHIGGIPYLLRQVNIPVYGGKLAIGLLRNKLEEHGLLRQTKLNIIGEDDIVKFRKTAVSFFRTTHSIPDSYGIVVKTPPGNIVHTGDFKFDFTPVGEPANLTKMAEIGKEGVLCLLSDSTNSENPEFTMSERRVGESIHDIFRKVDGRIIFATFASNIHRLQQVIEAAVQNGRKVAVFGRSMESAIEIGQTLGYINCPKNTFIEHNEINRMPANKVTILCTGSQGEPMAALSRIANGTHRQISINPGDTVVFSSSPIPGNTISVSRTINQLYRAGAEVIHGPLNDIHTSGHGGQEEQKLMLRLIKPKFFMPIHGEYRMQKMHVKLATDCGIPEENCFIMDNGEVLALKGDEASVAGKIPSGSVYIDGSGIGDIGNIVLRDRRILSEEGLVIVVVSIDMDDFKISAGPDLISRGFVYMRESGDLINDAQELISNHLQKVMERKTTQWSEIKNEITDTLAPFLYEKTKRRPMILPIIMEV</sequence>
<organism>
    <name type="scientific">Bacillus subtilis (strain 168)</name>
    <dbReference type="NCBI Taxonomy" id="224308"/>
    <lineage>
        <taxon>Bacteria</taxon>
        <taxon>Bacillati</taxon>
        <taxon>Bacillota</taxon>
        <taxon>Bacilli</taxon>
        <taxon>Bacillales</taxon>
        <taxon>Bacillaceae</taxon>
        <taxon>Bacillus</taxon>
    </lineage>
</organism>
<name>RNJ1_BACSU</name>